<keyword id="KW-0066">ATP synthesis</keyword>
<keyword id="KW-0997">Cell inner membrane</keyword>
<keyword id="KW-1003">Cell membrane</keyword>
<keyword id="KW-0139">CF(1)</keyword>
<keyword id="KW-0375">Hydrogen ion transport</keyword>
<keyword id="KW-0406">Ion transport</keyword>
<keyword id="KW-0472">Membrane</keyword>
<keyword id="KW-1185">Reference proteome</keyword>
<keyword id="KW-0813">Transport</keyword>
<reference key="1">
    <citation type="journal article" date="2007" name="Science">
        <title>Legumes symbioses: absence of nod genes in photosynthetic bradyrhizobia.</title>
        <authorList>
            <person name="Giraud E."/>
            <person name="Moulin L."/>
            <person name="Vallenet D."/>
            <person name="Barbe V."/>
            <person name="Cytryn E."/>
            <person name="Avarre J.-C."/>
            <person name="Jaubert M."/>
            <person name="Simon D."/>
            <person name="Cartieaux F."/>
            <person name="Prin Y."/>
            <person name="Bena G."/>
            <person name="Hannibal L."/>
            <person name="Fardoux J."/>
            <person name="Kojadinovic M."/>
            <person name="Vuillet L."/>
            <person name="Lajus A."/>
            <person name="Cruveiller S."/>
            <person name="Rouy Z."/>
            <person name="Mangenot S."/>
            <person name="Segurens B."/>
            <person name="Dossat C."/>
            <person name="Franck W.L."/>
            <person name="Chang W.-S."/>
            <person name="Saunders E."/>
            <person name="Bruce D."/>
            <person name="Richardson P."/>
            <person name="Normand P."/>
            <person name="Dreyfus B."/>
            <person name="Pignol D."/>
            <person name="Stacey G."/>
            <person name="Emerich D."/>
            <person name="Vermeglio A."/>
            <person name="Medigue C."/>
            <person name="Sadowsky M."/>
        </authorList>
    </citation>
    <scope>NUCLEOTIDE SEQUENCE [LARGE SCALE GENOMIC DNA]</scope>
    <source>
        <strain>ORS 278</strain>
    </source>
</reference>
<proteinExistence type="inferred from homology"/>
<gene>
    <name evidence="1" type="primary">atpG</name>
    <name type="ordered locus">BRADO0418</name>
</gene>
<feature type="chain" id="PRO_1000053165" description="ATP synthase gamma chain">
    <location>
        <begin position="1"/>
        <end position="292"/>
    </location>
</feature>
<protein>
    <recommendedName>
        <fullName evidence="1">ATP synthase gamma chain</fullName>
    </recommendedName>
    <alternativeName>
        <fullName evidence="1">ATP synthase F1 sector gamma subunit</fullName>
    </alternativeName>
    <alternativeName>
        <fullName evidence="1">F-ATPase gamma subunit</fullName>
    </alternativeName>
</protein>
<evidence type="ECO:0000255" key="1">
    <source>
        <dbReference type="HAMAP-Rule" id="MF_00815"/>
    </source>
</evidence>
<organism>
    <name type="scientific">Bradyrhizobium sp. (strain ORS 278)</name>
    <dbReference type="NCBI Taxonomy" id="114615"/>
    <lineage>
        <taxon>Bacteria</taxon>
        <taxon>Pseudomonadati</taxon>
        <taxon>Pseudomonadota</taxon>
        <taxon>Alphaproteobacteria</taxon>
        <taxon>Hyphomicrobiales</taxon>
        <taxon>Nitrobacteraceae</taxon>
        <taxon>Bradyrhizobium</taxon>
    </lineage>
</organism>
<dbReference type="EMBL" id="CU234118">
    <property type="protein sequence ID" value="CAL74365.1"/>
    <property type="molecule type" value="Genomic_DNA"/>
</dbReference>
<dbReference type="RefSeq" id="WP_011923643.1">
    <property type="nucleotide sequence ID" value="NC_009445.1"/>
</dbReference>
<dbReference type="SMR" id="A4YKD9"/>
<dbReference type="STRING" id="114615.BRADO0418"/>
<dbReference type="KEGG" id="bra:BRADO0418"/>
<dbReference type="eggNOG" id="COG0224">
    <property type="taxonomic scope" value="Bacteria"/>
</dbReference>
<dbReference type="HOGENOM" id="CLU_050669_0_1_5"/>
<dbReference type="OrthoDB" id="9812769at2"/>
<dbReference type="Proteomes" id="UP000001994">
    <property type="component" value="Chromosome"/>
</dbReference>
<dbReference type="GO" id="GO:0005886">
    <property type="term" value="C:plasma membrane"/>
    <property type="evidence" value="ECO:0007669"/>
    <property type="project" value="UniProtKB-SubCell"/>
</dbReference>
<dbReference type="GO" id="GO:0045259">
    <property type="term" value="C:proton-transporting ATP synthase complex"/>
    <property type="evidence" value="ECO:0007669"/>
    <property type="project" value="UniProtKB-KW"/>
</dbReference>
<dbReference type="GO" id="GO:0005524">
    <property type="term" value="F:ATP binding"/>
    <property type="evidence" value="ECO:0007669"/>
    <property type="project" value="UniProtKB-UniRule"/>
</dbReference>
<dbReference type="GO" id="GO:0046933">
    <property type="term" value="F:proton-transporting ATP synthase activity, rotational mechanism"/>
    <property type="evidence" value="ECO:0007669"/>
    <property type="project" value="UniProtKB-UniRule"/>
</dbReference>
<dbReference type="GO" id="GO:0042777">
    <property type="term" value="P:proton motive force-driven plasma membrane ATP synthesis"/>
    <property type="evidence" value="ECO:0007669"/>
    <property type="project" value="UniProtKB-UniRule"/>
</dbReference>
<dbReference type="CDD" id="cd12151">
    <property type="entry name" value="F1-ATPase_gamma"/>
    <property type="match status" value="1"/>
</dbReference>
<dbReference type="FunFam" id="1.10.287.80:FF:000001">
    <property type="entry name" value="ATP synthase gamma chain"/>
    <property type="match status" value="1"/>
</dbReference>
<dbReference type="Gene3D" id="3.40.1380.10">
    <property type="match status" value="1"/>
</dbReference>
<dbReference type="Gene3D" id="1.10.287.80">
    <property type="entry name" value="ATP synthase, gamma subunit, helix hairpin domain"/>
    <property type="match status" value="1"/>
</dbReference>
<dbReference type="HAMAP" id="MF_00815">
    <property type="entry name" value="ATP_synth_gamma_bact"/>
    <property type="match status" value="1"/>
</dbReference>
<dbReference type="InterPro" id="IPR035968">
    <property type="entry name" value="ATP_synth_F1_ATPase_gsu"/>
</dbReference>
<dbReference type="InterPro" id="IPR000131">
    <property type="entry name" value="ATP_synth_F1_gsu"/>
</dbReference>
<dbReference type="InterPro" id="IPR023632">
    <property type="entry name" value="ATP_synth_F1_gsu_CS"/>
</dbReference>
<dbReference type="NCBIfam" id="TIGR01146">
    <property type="entry name" value="ATPsyn_F1gamma"/>
    <property type="match status" value="1"/>
</dbReference>
<dbReference type="NCBIfam" id="NF004146">
    <property type="entry name" value="PRK05621.1-4"/>
    <property type="match status" value="1"/>
</dbReference>
<dbReference type="PANTHER" id="PTHR11693">
    <property type="entry name" value="ATP SYNTHASE GAMMA CHAIN"/>
    <property type="match status" value="1"/>
</dbReference>
<dbReference type="PANTHER" id="PTHR11693:SF22">
    <property type="entry name" value="ATP SYNTHASE SUBUNIT GAMMA, MITOCHONDRIAL"/>
    <property type="match status" value="1"/>
</dbReference>
<dbReference type="Pfam" id="PF00231">
    <property type="entry name" value="ATP-synt"/>
    <property type="match status" value="1"/>
</dbReference>
<dbReference type="PIRSF" id="PIRSF039089">
    <property type="entry name" value="ATP_synthase_gamma"/>
    <property type="match status" value="1"/>
</dbReference>
<dbReference type="PRINTS" id="PR00126">
    <property type="entry name" value="ATPASEGAMMA"/>
</dbReference>
<dbReference type="SUPFAM" id="SSF52943">
    <property type="entry name" value="ATP synthase (F1-ATPase), gamma subunit"/>
    <property type="match status" value="1"/>
</dbReference>
<dbReference type="PROSITE" id="PS00153">
    <property type="entry name" value="ATPASE_GAMMA"/>
    <property type="match status" value="1"/>
</dbReference>
<sequence length="292" mass="32006">MASLKDMRVRIASTKATQKITKAMQMVAASKLRRAQLAAEAARPYAEKMDAVISNIAAASAGSPASSKLLAGTGRDQVHLLLVCTGERGLSGAFNSSIVRLARERALALMNQGKDVKFFCVGRKGYEQLRRQFEKQIIAHVDLRSVRQIGFVHAEDIAKQVIARFDAGEFDVCTLFYSRFKSVIAQIPTAQQIIPLVVEAPAANAAPVALYEYEPEEDEILSALLPRNVGVQIFRALLENNASFYGAQMSAMDNATRNAGEMIRKQTLVYNRTRQAMITKELIEIISGAEAV</sequence>
<accession>A4YKD9</accession>
<comment type="function">
    <text evidence="1">Produces ATP from ADP in the presence of a proton gradient across the membrane. The gamma chain is believed to be important in regulating ATPase activity and the flow of protons through the CF(0) complex.</text>
</comment>
<comment type="subunit">
    <text evidence="1">F-type ATPases have 2 components, CF(1) - the catalytic core - and CF(0) - the membrane proton channel. CF(1) has five subunits: alpha(3), beta(3), gamma(1), delta(1), epsilon(1). CF(0) has three main subunits: a, b and c.</text>
</comment>
<comment type="subcellular location">
    <subcellularLocation>
        <location evidence="1">Cell inner membrane</location>
        <topology evidence="1">Peripheral membrane protein</topology>
    </subcellularLocation>
</comment>
<comment type="similarity">
    <text evidence="1">Belongs to the ATPase gamma chain family.</text>
</comment>
<name>ATPG_BRASO</name>